<protein>
    <recommendedName>
        <fullName evidence="1">Large ribosomal subunit protein uL24</fullName>
    </recommendedName>
    <alternativeName>
        <fullName evidence="2">50S ribosomal protein L24</fullName>
    </alternativeName>
</protein>
<accession>Q1WSA1</accession>
<dbReference type="EMBL" id="CP000233">
    <property type="protein sequence ID" value="ABE00228.1"/>
    <property type="molecule type" value="Genomic_DNA"/>
</dbReference>
<dbReference type="RefSeq" id="WP_003701316.1">
    <property type="nucleotide sequence ID" value="NC_007929.1"/>
</dbReference>
<dbReference type="RefSeq" id="YP_536311.1">
    <property type="nucleotide sequence ID" value="NC_007929.1"/>
</dbReference>
<dbReference type="SMR" id="Q1WSA1"/>
<dbReference type="STRING" id="362948.LSL_1424"/>
<dbReference type="GeneID" id="89466159"/>
<dbReference type="KEGG" id="lsl:LSL_1424"/>
<dbReference type="PATRIC" id="fig|362948.14.peg.1507"/>
<dbReference type="HOGENOM" id="CLU_093315_2_0_9"/>
<dbReference type="OrthoDB" id="9807419at2"/>
<dbReference type="Proteomes" id="UP000006559">
    <property type="component" value="Chromosome"/>
</dbReference>
<dbReference type="GO" id="GO:1990904">
    <property type="term" value="C:ribonucleoprotein complex"/>
    <property type="evidence" value="ECO:0007669"/>
    <property type="project" value="UniProtKB-KW"/>
</dbReference>
<dbReference type="GO" id="GO:0005840">
    <property type="term" value="C:ribosome"/>
    <property type="evidence" value="ECO:0007669"/>
    <property type="project" value="UniProtKB-KW"/>
</dbReference>
<dbReference type="GO" id="GO:0019843">
    <property type="term" value="F:rRNA binding"/>
    <property type="evidence" value="ECO:0007669"/>
    <property type="project" value="UniProtKB-UniRule"/>
</dbReference>
<dbReference type="GO" id="GO:0003735">
    <property type="term" value="F:structural constituent of ribosome"/>
    <property type="evidence" value="ECO:0007669"/>
    <property type="project" value="InterPro"/>
</dbReference>
<dbReference type="GO" id="GO:0006412">
    <property type="term" value="P:translation"/>
    <property type="evidence" value="ECO:0007669"/>
    <property type="project" value="UniProtKB-UniRule"/>
</dbReference>
<dbReference type="CDD" id="cd06089">
    <property type="entry name" value="KOW_RPL26"/>
    <property type="match status" value="1"/>
</dbReference>
<dbReference type="FunFam" id="2.30.30.30:FF:000004">
    <property type="entry name" value="50S ribosomal protein L24"/>
    <property type="match status" value="1"/>
</dbReference>
<dbReference type="Gene3D" id="2.30.30.30">
    <property type="match status" value="1"/>
</dbReference>
<dbReference type="HAMAP" id="MF_01326_B">
    <property type="entry name" value="Ribosomal_uL24_B"/>
    <property type="match status" value="1"/>
</dbReference>
<dbReference type="InterPro" id="IPR005824">
    <property type="entry name" value="KOW"/>
</dbReference>
<dbReference type="InterPro" id="IPR014722">
    <property type="entry name" value="Rib_uL2_dom2"/>
</dbReference>
<dbReference type="InterPro" id="IPR003256">
    <property type="entry name" value="Ribosomal_uL24"/>
</dbReference>
<dbReference type="InterPro" id="IPR005825">
    <property type="entry name" value="Ribosomal_uL24_CS"/>
</dbReference>
<dbReference type="InterPro" id="IPR041988">
    <property type="entry name" value="Ribosomal_uL24_KOW"/>
</dbReference>
<dbReference type="InterPro" id="IPR008991">
    <property type="entry name" value="Translation_prot_SH3-like_sf"/>
</dbReference>
<dbReference type="NCBIfam" id="TIGR01079">
    <property type="entry name" value="rplX_bact"/>
    <property type="match status" value="1"/>
</dbReference>
<dbReference type="PANTHER" id="PTHR12903">
    <property type="entry name" value="MITOCHONDRIAL RIBOSOMAL PROTEIN L24"/>
    <property type="match status" value="1"/>
</dbReference>
<dbReference type="Pfam" id="PF00467">
    <property type="entry name" value="KOW"/>
    <property type="match status" value="1"/>
</dbReference>
<dbReference type="Pfam" id="PF17136">
    <property type="entry name" value="ribosomal_L24"/>
    <property type="match status" value="1"/>
</dbReference>
<dbReference type="SMART" id="SM00739">
    <property type="entry name" value="KOW"/>
    <property type="match status" value="1"/>
</dbReference>
<dbReference type="SUPFAM" id="SSF50104">
    <property type="entry name" value="Translation proteins SH3-like domain"/>
    <property type="match status" value="1"/>
</dbReference>
<dbReference type="PROSITE" id="PS01108">
    <property type="entry name" value="RIBOSOMAL_L24"/>
    <property type="match status" value="1"/>
</dbReference>
<organism>
    <name type="scientific">Ligilactobacillus salivarius (strain UCC118)</name>
    <name type="common">Lactobacillus salivarius</name>
    <dbReference type="NCBI Taxonomy" id="362948"/>
    <lineage>
        <taxon>Bacteria</taxon>
        <taxon>Bacillati</taxon>
        <taxon>Bacillota</taxon>
        <taxon>Bacilli</taxon>
        <taxon>Lactobacillales</taxon>
        <taxon>Lactobacillaceae</taxon>
        <taxon>Ligilactobacillus</taxon>
    </lineage>
</organism>
<feature type="chain" id="PRO_1000052239" description="Large ribosomal subunit protein uL24">
    <location>
        <begin position="1"/>
        <end position="101"/>
    </location>
</feature>
<sequence>MFIKKNDKVKVIAGKDKGKEGTVEKVFPAQDRVIVKGINIVKKHQKPTNANPNGGIVEVEAPIHVSNVMLIDPSNNEATRVGFKVVDGKKVRVSKKSGEIL</sequence>
<name>RL24_LIGS1</name>
<keyword id="KW-1185">Reference proteome</keyword>
<keyword id="KW-0687">Ribonucleoprotein</keyword>
<keyword id="KW-0689">Ribosomal protein</keyword>
<keyword id="KW-0694">RNA-binding</keyword>
<keyword id="KW-0699">rRNA-binding</keyword>
<proteinExistence type="inferred from homology"/>
<comment type="function">
    <text evidence="1">One of two assembly initiator proteins, it binds directly to the 5'-end of the 23S rRNA, where it nucleates assembly of the 50S subunit.</text>
</comment>
<comment type="function">
    <text evidence="1">One of the proteins that surrounds the polypeptide exit tunnel on the outside of the subunit.</text>
</comment>
<comment type="subunit">
    <text evidence="1">Part of the 50S ribosomal subunit.</text>
</comment>
<comment type="similarity">
    <text evidence="1">Belongs to the universal ribosomal protein uL24 family.</text>
</comment>
<gene>
    <name evidence="1" type="primary">rplX</name>
    <name type="ordered locus">LSL_1424</name>
</gene>
<reference key="1">
    <citation type="journal article" date="2006" name="Proc. Natl. Acad. Sci. U.S.A.">
        <title>Multireplicon genome architecture of Lactobacillus salivarius.</title>
        <authorList>
            <person name="Claesson M.J."/>
            <person name="Li Y."/>
            <person name="Leahy S."/>
            <person name="Canchaya C."/>
            <person name="van Pijkeren J.P."/>
            <person name="Cerdeno-Tarraga A.M."/>
            <person name="Parkhill J."/>
            <person name="Flynn S."/>
            <person name="O'Sullivan G.C."/>
            <person name="Collins J.K."/>
            <person name="Higgins D."/>
            <person name="Shanahan F."/>
            <person name="Fitzgerald G.F."/>
            <person name="van Sinderen D."/>
            <person name="O'Toole P.W."/>
        </authorList>
    </citation>
    <scope>NUCLEOTIDE SEQUENCE [LARGE SCALE GENOMIC DNA]</scope>
    <source>
        <strain>UCC118</strain>
    </source>
</reference>
<evidence type="ECO:0000255" key="1">
    <source>
        <dbReference type="HAMAP-Rule" id="MF_01326"/>
    </source>
</evidence>
<evidence type="ECO:0000305" key="2"/>